<accession>B5ZB60</accession>
<gene>
    <name evidence="1" type="primary">adk</name>
    <name type="ordered locus">UUR10_0246</name>
</gene>
<organism>
    <name type="scientific">Ureaplasma urealyticum serovar 10 (strain ATCC 33699 / Western)</name>
    <dbReference type="NCBI Taxonomy" id="565575"/>
    <lineage>
        <taxon>Bacteria</taxon>
        <taxon>Bacillati</taxon>
        <taxon>Mycoplasmatota</taxon>
        <taxon>Mycoplasmoidales</taxon>
        <taxon>Mycoplasmoidaceae</taxon>
        <taxon>Ureaplasma</taxon>
    </lineage>
</organism>
<proteinExistence type="inferred from homology"/>
<name>KAD_UREU1</name>
<reference key="1">
    <citation type="submission" date="2008-10" db="EMBL/GenBank/DDBJ databases">
        <title>Genome sequence of Ureaplasma urealyticum serovar 10 ATCC-33699.</title>
        <authorList>
            <person name="Shrivastava S."/>
            <person name="Methe B.A."/>
            <person name="Glass J."/>
            <person name="White K."/>
            <person name="Duffy L.B."/>
        </authorList>
    </citation>
    <scope>NUCLEOTIDE SEQUENCE [LARGE SCALE GENOMIC DNA]</scope>
    <source>
        <strain>ATCC 33699 / Western</strain>
    </source>
</reference>
<dbReference type="EC" id="2.7.4.3" evidence="1"/>
<dbReference type="EMBL" id="CP001184">
    <property type="protein sequence ID" value="ACI60120.1"/>
    <property type="molecule type" value="Genomic_DNA"/>
</dbReference>
<dbReference type="RefSeq" id="WP_012560290.1">
    <property type="nucleotide sequence ID" value="NC_011374.1"/>
</dbReference>
<dbReference type="SMR" id="B5ZB60"/>
<dbReference type="STRING" id="565575.UUR10_0246"/>
<dbReference type="KEGG" id="uue:UUR10_0246"/>
<dbReference type="eggNOG" id="COG0563">
    <property type="taxonomic scope" value="Bacteria"/>
</dbReference>
<dbReference type="HOGENOM" id="CLU_032354_1_2_14"/>
<dbReference type="OrthoDB" id="9805030at2"/>
<dbReference type="UniPathway" id="UPA00588">
    <property type="reaction ID" value="UER00649"/>
</dbReference>
<dbReference type="Proteomes" id="UP000002018">
    <property type="component" value="Chromosome"/>
</dbReference>
<dbReference type="GO" id="GO:0005737">
    <property type="term" value="C:cytoplasm"/>
    <property type="evidence" value="ECO:0007669"/>
    <property type="project" value="UniProtKB-SubCell"/>
</dbReference>
<dbReference type="GO" id="GO:0004017">
    <property type="term" value="F:adenylate kinase activity"/>
    <property type="evidence" value="ECO:0007669"/>
    <property type="project" value="UniProtKB-UniRule"/>
</dbReference>
<dbReference type="GO" id="GO:0005524">
    <property type="term" value="F:ATP binding"/>
    <property type="evidence" value="ECO:0007669"/>
    <property type="project" value="UniProtKB-UniRule"/>
</dbReference>
<dbReference type="GO" id="GO:0008270">
    <property type="term" value="F:zinc ion binding"/>
    <property type="evidence" value="ECO:0007669"/>
    <property type="project" value="UniProtKB-UniRule"/>
</dbReference>
<dbReference type="GO" id="GO:0044209">
    <property type="term" value="P:AMP salvage"/>
    <property type="evidence" value="ECO:0007669"/>
    <property type="project" value="UniProtKB-UniRule"/>
</dbReference>
<dbReference type="CDD" id="cd01428">
    <property type="entry name" value="ADK"/>
    <property type="match status" value="1"/>
</dbReference>
<dbReference type="Gene3D" id="3.40.50.300">
    <property type="entry name" value="P-loop containing nucleotide triphosphate hydrolases"/>
    <property type="match status" value="1"/>
</dbReference>
<dbReference type="HAMAP" id="MF_00235">
    <property type="entry name" value="Adenylate_kinase_Adk"/>
    <property type="match status" value="1"/>
</dbReference>
<dbReference type="InterPro" id="IPR006259">
    <property type="entry name" value="Adenyl_kin_sub"/>
</dbReference>
<dbReference type="InterPro" id="IPR000850">
    <property type="entry name" value="Adenylat/UMP-CMP_kin"/>
</dbReference>
<dbReference type="InterPro" id="IPR033690">
    <property type="entry name" value="Adenylat_kinase_CS"/>
</dbReference>
<dbReference type="InterPro" id="IPR007862">
    <property type="entry name" value="Adenylate_kinase_lid-dom"/>
</dbReference>
<dbReference type="InterPro" id="IPR036193">
    <property type="entry name" value="ADK_active_lid_dom_sf"/>
</dbReference>
<dbReference type="InterPro" id="IPR027417">
    <property type="entry name" value="P-loop_NTPase"/>
</dbReference>
<dbReference type="NCBIfam" id="TIGR01351">
    <property type="entry name" value="adk"/>
    <property type="match status" value="1"/>
</dbReference>
<dbReference type="PANTHER" id="PTHR23359">
    <property type="entry name" value="NUCLEOTIDE KINASE"/>
    <property type="match status" value="1"/>
</dbReference>
<dbReference type="Pfam" id="PF00406">
    <property type="entry name" value="ADK"/>
    <property type="match status" value="1"/>
</dbReference>
<dbReference type="Pfam" id="PF05191">
    <property type="entry name" value="ADK_lid"/>
    <property type="match status" value="1"/>
</dbReference>
<dbReference type="PRINTS" id="PR00094">
    <property type="entry name" value="ADENYLTKNASE"/>
</dbReference>
<dbReference type="SUPFAM" id="SSF57774">
    <property type="entry name" value="Microbial and mitochondrial ADK, insert 'zinc finger' domain"/>
    <property type="match status" value="1"/>
</dbReference>
<dbReference type="SUPFAM" id="SSF52540">
    <property type="entry name" value="P-loop containing nucleoside triphosphate hydrolases"/>
    <property type="match status" value="1"/>
</dbReference>
<dbReference type="PROSITE" id="PS00113">
    <property type="entry name" value="ADENYLATE_KINASE"/>
    <property type="match status" value="1"/>
</dbReference>
<evidence type="ECO:0000255" key="1">
    <source>
        <dbReference type="HAMAP-Rule" id="MF_00235"/>
    </source>
</evidence>
<feature type="chain" id="PRO_1000100624" description="Adenylate kinase">
    <location>
        <begin position="1"/>
        <end position="213"/>
    </location>
</feature>
<feature type="region of interest" description="NMP" evidence="1">
    <location>
        <begin position="30"/>
        <end position="60"/>
    </location>
</feature>
<feature type="region of interest" description="LID" evidence="1">
    <location>
        <begin position="123"/>
        <end position="160"/>
    </location>
</feature>
<feature type="binding site" evidence="1">
    <location>
        <begin position="10"/>
        <end position="15"/>
    </location>
    <ligand>
        <name>ATP</name>
        <dbReference type="ChEBI" id="CHEBI:30616"/>
    </ligand>
</feature>
<feature type="binding site" evidence="1">
    <location>
        <position position="31"/>
    </location>
    <ligand>
        <name>AMP</name>
        <dbReference type="ChEBI" id="CHEBI:456215"/>
    </ligand>
</feature>
<feature type="binding site" evidence="1">
    <location>
        <position position="36"/>
    </location>
    <ligand>
        <name>AMP</name>
        <dbReference type="ChEBI" id="CHEBI:456215"/>
    </ligand>
</feature>
<feature type="binding site" evidence="1">
    <location>
        <begin position="58"/>
        <end position="60"/>
    </location>
    <ligand>
        <name>AMP</name>
        <dbReference type="ChEBI" id="CHEBI:456215"/>
    </ligand>
</feature>
<feature type="binding site" evidence="1">
    <location>
        <begin position="87"/>
        <end position="90"/>
    </location>
    <ligand>
        <name>AMP</name>
        <dbReference type="ChEBI" id="CHEBI:456215"/>
    </ligand>
</feature>
<feature type="binding site" evidence="1">
    <location>
        <position position="94"/>
    </location>
    <ligand>
        <name>AMP</name>
        <dbReference type="ChEBI" id="CHEBI:456215"/>
    </ligand>
</feature>
<feature type="binding site" evidence="1">
    <location>
        <position position="124"/>
    </location>
    <ligand>
        <name>ATP</name>
        <dbReference type="ChEBI" id="CHEBI:30616"/>
    </ligand>
</feature>
<feature type="binding site" evidence="1">
    <location>
        <position position="127"/>
    </location>
    <ligand>
        <name>Zn(2+)</name>
        <dbReference type="ChEBI" id="CHEBI:29105"/>
        <note>structural</note>
    </ligand>
</feature>
<feature type="binding site" evidence="1">
    <location>
        <position position="130"/>
    </location>
    <ligand>
        <name>Zn(2+)</name>
        <dbReference type="ChEBI" id="CHEBI:29105"/>
        <note>structural</note>
    </ligand>
</feature>
<feature type="binding site" evidence="1">
    <location>
        <begin position="133"/>
        <end position="134"/>
    </location>
    <ligand>
        <name>ATP</name>
        <dbReference type="ChEBI" id="CHEBI:30616"/>
    </ligand>
</feature>
<feature type="binding site" evidence="1">
    <location>
        <position position="147"/>
    </location>
    <ligand>
        <name>Zn(2+)</name>
        <dbReference type="ChEBI" id="CHEBI:29105"/>
        <note>structural</note>
    </ligand>
</feature>
<feature type="binding site" evidence="1">
    <location>
        <position position="150"/>
    </location>
    <ligand>
        <name>Zn(2+)</name>
        <dbReference type="ChEBI" id="CHEBI:29105"/>
        <note>structural</note>
    </ligand>
</feature>
<feature type="binding site" evidence="1">
    <location>
        <position position="157"/>
    </location>
    <ligand>
        <name>AMP</name>
        <dbReference type="ChEBI" id="CHEBI:456215"/>
    </ligand>
</feature>
<feature type="binding site" evidence="1">
    <location>
        <position position="168"/>
    </location>
    <ligand>
        <name>AMP</name>
        <dbReference type="ChEBI" id="CHEBI:456215"/>
    </ligand>
</feature>
<feature type="binding site" evidence="1">
    <location>
        <position position="196"/>
    </location>
    <ligand>
        <name>ATP</name>
        <dbReference type="ChEBI" id="CHEBI:30616"/>
    </ligand>
</feature>
<keyword id="KW-0067">ATP-binding</keyword>
<keyword id="KW-0963">Cytoplasm</keyword>
<keyword id="KW-0418">Kinase</keyword>
<keyword id="KW-0479">Metal-binding</keyword>
<keyword id="KW-0545">Nucleotide biosynthesis</keyword>
<keyword id="KW-0547">Nucleotide-binding</keyword>
<keyword id="KW-0808">Transferase</keyword>
<keyword id="KW-0862">Zinc</keyword>
<sequence>MKILLIGPPGSGKGSVSELLTKNNALKHVSTGNLFRAILKEDSELARKIKEINVSGGKLVPDEITNQVAKSAIDELIKNQQSFILDGYPRTINQALALEQYCDLDYIFYLDINHQELMKRLTGRWMCPKCAGIYNIHFKKPQVDGVCDNDQATLYQRADDHEDAVSIRLDEYDKLTLPLIKHYKTNPRFIKINANQPIKDVYEDINNYLKQNK</sequence>
<protein>
    <recommendedName>
        <fullName evidence="1">Adenylate kinase</fullName>
        <shortName evidence="1">AK</shortName>
        <ecNumber evidence="1">2.7.4.3</ecNumber>
    </recommendedName>
    <alternativeName>
        <fullName evidence="1">ATP-AMP transphosphorylase</fullName>
    </alternativeName>
    <alternativeName>
        <fullName evidence="1">ATP:AMP phosphotransferase</fullName>
    </alternativeName>
    <alternativeName>
        <fullName evidence="1">Adenylate monophosphate kinase</fullName>
    </alternativeName>
</protein>
<comment type="function">
    <text evidence="1">Catalyzes the reversible transfer of the terminal phosphate group between ATP and AMP. Plays an important role in cellular energy homeostasis and in adenine nucleotide metabolism.</text>
</comment>
<comment type="catalytic activity">
    <reaction evidence="1">
        <text>AMP + ATP = 2 ADP</text>
        <dbReference type="Rhea" id="RHEA:12973"/>
        <dbReference type="ChEBI" id="CHEBI:30616"/>
        <dbReference type="ChEBI" id="CHEBI:456215"/>
        <dbReference type="ChEBI" id="CHEBI:456216"/>
        <dbReference type="EC" id="2.7.4.3"/>
    </reaction>
</comment>
<comment type="pathway">
    <text evidence="1">Purine metabolism; AMP biosynthesis via salvage pathway; AMP from ADP: step 1/1.</text>
</comment>
<comment type="subunit">
    <text evidence="1">Monomer.</text>
</comment>
<comment type="subcellular location">
    <subcellularLocation>
        <location evidence="1">Cytoplasm</location>
    </subcellularLocation>
</comment>
<comment type="domain">
    <text evidence="1">Consists of three domains, a large central CORE domain and two small peripheral domains, NMPbind and LID, which undergo movements during catalysis. The LID domain closes over the site of phosphoryl transfer upon ATP binding. Assembling and dissambling the active center during each catalytic cycle provides an effective means to prevent ATP hydrolysis. Some bacteria have evolved a zinc-coordinating structure that stabilizes the LID domain.</text>
</comment>
<comment type="similarity">
    <text evidence="1">Belongs to the adenylate kinase family.</text>
</comment>